<protein>
    <recommendedName>
        <fullName evidence="1">UDP-N-acetylenolpyruvoylglucosamine reductase</fullName>
        <ecNumber evidence="1">1.3.1.98</ecNumber>
    </recommendedName>
    <alternativeName>
        <fullName evidence="1">UDP-N-acetylmuramate dehydrogenase</fullName>
    </alternativeName>
</protein>
<dbReference type="EC" id="1.3.1.98" evidence="1"/>
<dbReference type="EMBL" id="BA000004">
    <property type="protein sequence ID" value="BAB06283.1"/>
    <property type="molecule type" value="Genomic_DNA"/>
</dbReference>
<dbReference type="PIR" id="D83970">
    <property type="entry name" value="D83970"/>
</dbReference>
<dbReference type="RefSeq" id="WP_010898715.1">
    <property type="nucleotide sequence ID" value="NC_002570.2"/>
</dbReference>
<dbReference type="SMR" id="Q9K9T1"/>
<dbReference type="STRING" id="272558.gene:10728462"/>
<dbReference type="KEGG" id="bha:BH2564"/>
<dbReference type="eggNOG" id="COG0812">
    <property type="taxonomic scope" value="Bacteria"/>
</dbReference>
<dbReference type="HOGENOM" id="CLU_035304_1_1_9"/>
<dbReference type="OrthoDB" id="9804753at2"/>
<dbReference type="UniPathway" id="UPA00219"/>
<dbReference type="Proteomes" id="UP000001258">
    <property type="component" value="Chromosome"/>
</dbReference>
<dbReference type="GO" id="GO:0005829">
    <property type="term" value="C:cytosol"/>
    <property type="evidence" value="ECO:0007669"/>
    <property type="project" value="TreeGrafter"/>
</dbReference>
<dbReference type="GO" id="GO:0071949">
    <property type="term" value="F:FAD binding"/>
    <property type="evidence" value="ECO:0007669"/>
    <property type="project" value="InterPro"/>
</dbReference>
<dbReference type="GO" id="GO:0008762">
    <property type="term" value="F:UDP-N-acetylmuramate dehydrogenase activity"/>
    <property type="evidence" value="ECO:0007669"/>
    <property type="project" value="UniProtKB-UniRule"/>
</dbReference>
<dbReference type="GO" id="GO:0051301">
    <property type="term" value="P:cell division"/>
    <property type="evidence" value="ECO:0007669"/>
    <property type="project" value="UniProtKB-KW"/>
</dbReference>
<dbReference type="GO" id="GO:0071555">
    <property type="term" value="P:cell wall organization"/>
    <property type="evidence" value="ECO:0007669"/>
    <property type="project" value="UniProtKB-KW"/>
</dbReference>
<dbReference type="GO" id="GO:0009252">
    <property type="term" value="P:peptidoglycan biosynthetic process"/>
    <property type="evidence" value="ECO:0007669"/>
    <property type="project" value="UniProtKB-UniRule"/>
</dbReference>
<dbReference type="GO" id="GO:0008360">
    <property type="term" value="P:regulation of cell shape"/>
    <property type="evidence" value="ECO:0007669"/>
    <property type="project" value="UniProtKB-KW"/>
</dbReference>
<dbReference type="Gene3D" id="3.30.465.10">
    <property type="match status" value="1"/>
</dbReference>
<dbReference type="Gene3D" id="3.90.78.10">
    <property type="entry name" value="UDP-N-acetylenolpyruvoylglucosamine reductase, C-terminal domain"/>
    <property type="match status" value="1"/>
</dbReference>
<dbReference type="Gene3D" id="3.30.43.10">
    <property type="entry name" value="Uridine Diphospho-n-acetylenolpyruvylglucosamine Reductase, domain 2"/>
    <property type="match status" value="1"/>
</dbReference>
<dbReference type="HAMAP" id="MF_00037">
    <property type="entry name" value="MurB"/>
    <property type="match status" value="1"/>
</dbReference>
<dbReference type="InterPro" id="IPR016166">
    <property type="entry name" value="FAD-bd_PCMH"/>
</dbReference>
<dbReference type="InterPro" id="IPR036318">
    <property type="entry name" value="FAD-bd_PCMH-like_sf"/>
</dbReference>
<dbReference type="InterPro" id="IPR016167">
    <property type="entry name" value="FAD-bd_PCMH_sub1"/>
</dbReference>
<dbReference type="InterPro" id="IPR016169">
    <property type="entry name" value="FAD-bd_PCMH_sub2"/>
</dbReference>
<dbReference type="InterPro" id="IPR003170">
    <property type="entry name" value="MurB"/>
</dbReference>
<dbReference type="InterPro" id="IPR011601">
    <property type="entry name" value="MurB_C"/>
</dbReference>
<dbReference type="InterPro" id="IPR036635">
    <property type="entry name" value="MurB_C_sf"/>
</dbReference>
<dbReference type="InterPro" id="IPR006094">
    <property type="entry name" value="Oxid_FAD_bind_N"/>
</dbReference>
<dbReference type="NCBIfam" id="TIGR00179">
    <property type="entry name" value="murB"/>
    <property type="match status" value="1"/>
</dbReference>
<dbReference type="NCBIfam" id="NF010480">
    <property type="entry name" value="PRK13905.1"/>
    <property type="match status" value="1"/>
</dbReference>
<dbReference type="PANTHER" id="PTHR21071">
    <property type="entry name" value="UDP-N-ACETYLENOLPYRUVOYLGLUCOSAMINE REDUCTASE"/>
    <property type="match status" value="1"/>
</dbReference>
<dbReference type="PANTHER" id="PTHR21071:SF5">
    <property type="entry name" value="UDP-N-ACETYLENOLPYRUVOYLGLUCOSAMINE REDUCTASE"/>
    <property type="match status" value="1"/>
</dbReference>
<dbReference type="Pfam" id="PF01565">
    <property type="entry name" value="FAD_binding_4"/>
    <property type="match status" value="1"/>
</dbReference>
<dbReference type="Pfam" id="PF02873">
    <property type="entry name" value="MurB_C"/>
    <property type="match status" value="1"/>
</dbReference>
<dbReference type="SUPFAM" id="SSF56176">
    <property type="entry name" value="FAD-binding/transporter-associated domain-like"/>
    <property type="match status" value="1"/>
</dbReference>
<dbReference type="SUPFAM" id="SSF56194">
    <property type="entry name" value="Uridine diphospho-N-Acetylenolpyruvylglucosamine reductase, MurB, C-terminal domain"/>
    <property type="match status" value="1"/>
</dbReference>
<dbReference type="PROSITE" id="PS51387">
    <property type="entry name" value="FAD_PCMH"/>
    <property type="match status" value="1"/>
</dbReference>
<proteinExistence type="inferred from homology"/>
<reference key="1">
    <citation type="journal article" date="2000" name="Nucleic Acids Res.">
        <title>Complete genome sequence of the alkaliphilic bacterium Bacillus halodurans and genomic sequence comparison with Bacillus subtilis.</title>
        <authorList>
            <person name="Takami H."/>
            <person name="Nakasone K."/>
            <person name="Takaki Y."/>
            <person name="Maeno G."/>
            <person name="Sasaki R."/>
            <person name="Masui N."/>
            <person name="Fuji F."/>
            <person name="Hirama C."/>
            <person name="Nakamura Y."/>
            <person name="Ogasawara N."/>
            <person name="Kuhara S."/>
            <person name="Horikoshi K."/>
        </authorList>
    </citation>
    <scope>NUCLEOTIDE SEQUENCE [LARGE SCALE GENOMIC DNA]</scope>
    <source>
        <strain>ATCC BAA-125 / DSM 18197 / FERM 7344 / JCM 9153 / C-125</strain>
    </source>
</reference>
<name>MURB_HALH5</name>
<evidence type="ECO:0000255" key="1">
    <source>
        <dbReference type="HAMAP-Rule" id="MF_00037"/>
    </source>
</evidence>
<organism>
    <name type="scientific">Halalkalibacterium halodurans (strain ATCC BAA-125 / DSM 18197 / FERM 7344 / JCM 9153 / C-125)</name>
    <name type="common">Bacillus halodurans</name>
    <dbReference type="NCBI Taxonomy" id="272558"/>
    <lineage>
        <taxon>Bacteria</taxon>
        <taxon>Bacillati</taxon>
        <taxon>Bacillota</taxon>
        <taxon>Bacilli</taxon>
        <taxon>Bacillales</taxon>
        <taxon>Bacillaceae</taxon>
        <taxon>Halalkalibacterium (ex Joshi et al. 2022)</taxon>
    </lineage>
</organism>
<comment type="function">
    <text evidence="1">Cell wall formation.</text>
</comment>
<comment type="catalytic activity">
    <reaction evidence="1">
        <text>UDP-N-acetyl-alpha-D-muramate + NADP(+) = UDP-N-acetyl-3-O-(1-carboxyvinyl)-alpha-D-glucosamine + NADPH + H(+)</text>
        <dbReference type="Rhea" id="RHEA:12248"/>
        <dbReference type="ChEBI" id="CHEBI:15378"/>
        <dbReference type="ChEBI" id="CHEBI:57783"/>
        <dbReference type="ChEBI" id="CHEBI:58349"/>
        <dbReference type="ChEBI" id="CHEBI:68483"/>
        <dbReference type="ChEBI" id="CHEBI:70757"/>
        <dbReference type="EC" id="1.3.1.98"/>
    </reaction>
</comment>
<comment type="cofactor">
    <cofactor evidence="1">
        <name>FAD</name>
        <dbReference type="ChEBI" id="CHEBI:57692"/>
    </cofactor>
</comment>
<comment type="pathway">
    <text evidence="1">Cell wall biogenesis; peptidoglycan biosynthesis.</text>
</comment>
<comment type="subcellular location">
    <subcellularLocation>
        <location evidence="1">Cytoplasm</location>
    </subcellularLocation>
</comment>
<comment type="similarity">
    <text evidence="1">Belongs to the MurB family.</text>
</comment>
<accession>Q9K9T1</accession>
<feature type="chain" id="PRO_0000179176" description="UDP-N-acetylenolpyruvoylglucosamine reductase">
    <location>
        <begin position="1"/>
        <end position="301"/>
    </location>
</feature>
<feature type="domain" description="FAD-binding PCMH-type" evidence="1">
    <location>
        <begin position="29"/>
        <end position="195"/>
    </location>
</feature>
<feature type="active site" evidence="1">
    <location>
        <position position="174"/>
    </location>
</feature>
<feature type="active site" description="Proton donor" evidence="1">
    <location>
        <position position="224"/>
    </location>
</feature>
<feature type="active site" evidence="1">
    <location>
        <position position="294"/>
    </location>
</feature>
<sequence length="301" mass="32899">MEQLVESLRALQVGEVRVNESLAHHTTWKIGGPADVFVIPNDIEGLKNTMKLIQETGCKWRVIGRGSNILVSDKGLRGVTIKLDKGLDHLEVNGESITVGAGFPVVKLATVISRQGLAGLEFAAGIPGSVGGAVFMNAGAHGSDISQILTKAHVLFPDGTLRWLTNEEMAFSYRTSLLQKNDGICVEAIFSLTRGDKEDIKKKLQKNKDYRRDTQPWNHPTCGSVFRNPLPEYAGQLIEKAGLKGYQIGGAQISTMHANFIVNTGDAKAADVLALIHHVKDTIQKQYQMNMETEVELIGER</sequence>
<keyword id="KW-0131">Cell cycle</keyword>
<keyword id="KW-0132">Cell division</keyword>
<keyword id="KW-0133">Cell shape</keyword>
<keyword id="KW-0961">Cell wall biogenesis/degradation</keyword>
<keyword id="KW-0963">Cytoplasm</keyword>
<keyword id="KW-0274">FAD</keyword>
<keyword id="KW-0285">Flavoprotein</keyword>
<keyword id="KW-0521">NADP</keyword>
<keyword id="KW-0560">Oxidoreductase</keyword>
<keyword id="KW-0573">Peptidoglycan synthesis</keyword>
<keyword id="KW-1185">Reference proteome</keyword>
<gene>
    <name evidence="1" type="primary">murB</name>
    <name type="ordered locus">BH2564</name>
</gene>